<evidence type="ECO:0000250" key="1">
    <source>
        <dbReference type="UniProtKB" id="Q08116"/>
    </source>
</evidence>
<evidence type="ECO:0000250" key="2">
    <source>
        <dbReference type="UniProtKB" id="Q9JL25"/>
    </source>
</evidence>
<evidence type="ECO:0000255" key="3">
    <source>
        <dbReference type="PROSITE-ProRule" id="PRU00171"/>
    </source>
</evidence>
<evidence type="ECO:0000256" key="4">
    <source>
        <dbReference type="SAM" id="MobiDB-lite"/>
    </source>
</evidence>
<organism>
    <name type="scientific">Equus caballus</name>
    <name type="common">Horse</name>
    <dbReference type="NCBI Taxonomy" id="9796"/>
    <lineage>
        <taxon>Eukaryota</taxon>
        <taxon>Metazoa</taxon>
        <taxon>Chordata</taxon>
        <taxon>Craniata</taxon>
        <taxon>Vertebrata</taxon>
        <taxon>Euteleostomi</taxon>
        <taxon>Mammalia</taxon>
        <taxon>Eutheria</taxon>
        <taxon>Laurasiatheria</taxon>
        <taxon>Perissodactyla</taxon>
        <taxon>Equidae</taxon>
        <taxon>Equus</taxon>
    </lineage>
</organism>
<reference key="1">
    <citation type="submission" date="2003-12" db="EMBL/GenBank/DDBJ databases">
        <title>Equus caballus regulator of G-protein signaling 1 (RGS1) mRNA.</title>
        <authorList>
            <person name="Takafuji V.A."/>
            <person name="Woody S.L."/>
            <person name="Crisman M.V."/>
            <person name="Howard R.D."/>
        </authorList>
    </citation>
    <scope>NUCLEOTIDE SEQUENCE [MRNA]</scope>
</reference>
<feature type="chain" id="PRO_0000204174" description="Regulator of G-protein signaling 1">
    <location>
        <begin position="1"/>
        <end position="196"/>
    </location>
</feature>
<feature type="domain" description="RGS" evidence="3">
    <location>
        <begin position="72"/>
        <end position="187"/>
    </location>
</feature>
<feature type="region of interest" description="Disordered" evidence="4">
    <location>
        <begin position="1"/>
        <end position="27"/>
    </location>
</feature>
<feature type="compositionally biased region" description="Basic and acidic residues" evidence="4">
    <location>
        <begin position="11"/>
        <end position="25"/>
    </location>
</feature>
<sequence>MPGMFFSANPKDLKGTDQSLLDDKTQKRRPKTFGMDVKAYLRSMIPHLESGMKSSKSKDILSADEVMQWSQSLEKLLANQTGQDVFGNFLKSEFSEENIEFWLACEDYKKTESDLLRCKAEKIYKAFVHSDAAKQINIDFHTRESTAKKIKAPTLTCFDEAQKVIYTLMEKDSYPRFLKSNIYLNLLNDLQANSLK</sequence>
<name>RGS1_HORSE</name>
<dbReference type="EMBL" id="AY499344">
    <property type="protein sequence ID" value="AAR91750.1"/>
    <property type="molecule type" value="mRNA"/>
</dbReference>
<dbReference type="RefSeq" id="NP_001075408.1">
    <property type="nucleotide sequence ID" value="NM_001081939.1"/>
</dbReference>
<dbReference type="SMR" id="Q6RG78"/>
<dbReference type="FunCoup" id="Q6RG78">
    <property type="interactions" value="157"/>
</dbReference>
<dbReference type="STRING" id="9796.ENSECAP00000003936"/>
<dbReference type="PaxDb" id="9796-ENSECAP00000003936"/>
<dbReference type="GeneID" id="100034151"/>
<dbReference type="KEGG" id="ecb:100034151"/>
<dbReference type="CTD" id="5996"/>
<dbReference type="HOGENOM" id="CLU_059863_3_3_1"/>
<dbReference type="InParanoid" id="Q6RG78"/>
<dbReference type="OrthoDB" id="196547at2759"/>
<dbReference type="TreeFam" id="TF315837"/>
<dbReference type="Proteomes" id="UP000002281">
    <property type="component" value="Unplaced"/>
</dbReference>
<dbReference type="GO" id="GO:0009898">
    <property type="term" value="C:cytoplasmic side of plasma membrane"/>
    <property type="evidence" value="ECO:0000250"/>
    <property type="project" value="UniProtKB"/>
</dbReference>
<dbReference type="GO" id="GO:0005829">
    <property type="term" value="C:cytosol"/>
    <property type="evidence" value="ECO:0000250"/>
    <property type="project" value="UniProtKB"/>
</dbReference>
<dbReference type="GO" id="GO:0005096">
    <property type="term" value="F:GTPase activator activity"/>
    <property type="evidence" value="ECO:0000250"/>
    <property type="project" value="UniProtKB"/>
</dbReference>
<dbReference type="GO" id="GO:0007186">
    <property type="term" value="P:G protein-coupled receptor signaling pathway"/>
    <property type="evidence" value="ECO:0000250"/>
    <property type="project" value="UniProtKB"/>
</dbReference>
<dbReference type="GO" id="GO:0061737">
    <property type="term" value="P:leukotriene signaling pathway"/>
    <property type="evidence" value="ECO:0000250"/>
    <property type="project" value="UniProtKB"/>
</dbReference>
<dbReference type="GO" id="GO:0009968">
    <property type="term" value="P:negative regulation of signal transduction"/>
    <property type="evidence" value="ECO:0007669"/>
    <property type="project" value="UniProtKB-KW"/>
</dbReference>
<dbReference type="GO" id="GO:0043547">
    <property type="term" value="P:positive regulation of GTPase activity"/>
    <property type="evidence" value="ECO:0000250"/>
    <property type="project" value="UniProtKB"/>
</dbReference>
<dbReference type="GO" id="GO:0007165">
    <property type="term" value="P:signal transduction"/>
    <property type="evidence" value="ECO:0000250"/>
    <property type="project" value="UniProtKB"/>
</dbReference>
<dbReference type="CDD" id="cd08715">
    <property type="entry name" value="RGS_RGS1"/>
    <property type="match status" value="1"/>
</dbReference>
<dbReference type="FunFam" id="1.10.167.10:FF:000001">
    <property type="entry name" value="Putative regulator of g-protein signaling 12"/>
    <property type="match status" value="1"/>
</dbReference>
<dbReference type="FunFam" id="1.10.196.10:FF:000009">
    <property type="entry name" value="Regulator of G-protein signaling 1"/>
    <property type="match status" value="1"/>
</dbReference>
<dbReference type="Gene3D" id="1.10.196.10">
    <property type="match status" value="2"/>
</dbReference>
<dbReference type="Gene3D" id="1.10.167.10">
    <property type="entry name" value="Regulator of G-protein Signalling 4, domain 2"/>
    <property type="match status" value="1"/>
</dbReference>
<dbReference type="InterPro" id="IPR016137">
    <property type="entry name" value="RGS"/>
</dbReference>
<dbReference type="InterPro" id="IPR036305">
    <property type="entry name" value="RGS_sf"/>
</dbReference>
<dbReference type="InterPro" id="IPR024066">
    <property type="entry name" value="RGS_subdom1/3"/>
</dbReference>
<dbReference type="InterPro" id="IPR044926">
    <property type="entry name" value="RGS_subdomain_2"/>
</dbReference>
<dbReference type="PANTHER" id="PTHR10845">
    <property type="entry name" value="REGULATOR OF G PROTEIN SIGNALING"/>
    <property type="match status" value="1"/>
</dbReference>
<dbReference type="PANTHER" id="PTHR10845:SF34">
    <property type="entry name" value="REGULATOR OF G-PROTEIN SIGNALING 1"/>
    <property type="match status" value="1"/>
</dbReference>
<dbReference type="Pfam" id="PF00615">
    <property type="entry name" value="RGS"/>
    <property type="match status" value="1"/>
</dbReference>
<dbReference type="PRINTS" id="PR01301">
    <property type="entry name" value="RGSPROTEIN"/>
</dbReference>
<dbReference type="SMART" id="SM00315">
    <property type="entry name" value="RGS"/>
    <property type="match status" value="1"/>
</dbReference>
<dbReference type="SUPFAM" id="SSF48097">
    <property type="entry name" value="Regulator of G-protein signaling, RGS"/>
    <property type="match status" value="1"/>
</dbReference>
<dbReference type="PROSITE" id="PS50132">
    <property type="entry name" value="RGS"/>
    <property type="match status" value="1"/>
</dbReference>
<gene>
    <name type="primary">RGS1</name>
</gene>
<comment type="function">
    <text evidence="1 2">Regulates G protein-coupled receptor signaling cascades, including signaling downstream of the N-formylpeptide chemoattractant receptors and leukotriene receptors. Inhibits B cell chemotaxis toward CXCL12 (By similarity). Inhibits signal transduction by increasing the GTPase activity of G protein alpha subunits, thereby driving them into their inactive GDP-bound form (By similarity).</text>
</comment>
<comment type="subunit">
    <text evidence="1">Interacts with GNAI1 and GNAQ.</text>
</comment>
<comment type="subcellular location">
    <subcellularLocation>
        <location evidence="1">Cell membrane</location>
        <topology evidence="1">Peripheral membrane protein</topology>
        <orientation evidence="1">Cytoplasmic side</orientation>
    </subcellularLocation>
    <subcellularLocation>
        <location evidence="1">Cytoplasm</location>
        <location evidence="1">Cytosol</location>
    </subcellularLocation>
</comment>
<keyword id="KW-1003">Cell membrane</keyword>
<keyword id="KW-0963">Cytoplasm</keyword>
<keyword id="KW-0343">GTPase activation</keyword>
<keyword id="KW-0472">Membrane</keyword>
<keyword id="KW-1185">Reference proteome</keyword>
<keyword id="KW-0734">Signal transduction inhibitor</keyword>
<proteinExistence type="evidence at transcript level"/>
<protein>
    <recommendedName>
        <fullName>Regulator of G-protein signaling 1</fullName>
        <shortName>RGS1</shortName>
    </recommendedName>
</protein>
<accession>Q6RG78</accession>